<dbReference type="EC" id="2.4.2.31" evidence="2"/>
<dbReference type="EC" id="3.2.2.5" evidence="2"/>
<dbReference type="EMBL" id="X52082">
    <property type="protein sequence ID" value="CAA36301.1"/>
    <property type="molecule type" value="mRNA"/>
</dbReference>
<dbReference type="PIR" id="S08464">
    <property type="entry name" value="S08464"/>
</dbReference>
<dbReference type="SMR" id="P17982"/>
<dbReference type="FunCoup" id="P17982">
    <property type="interactions" value="8"/>
</dbReference>
<dbReference type="GlyCosmos" id="P17982">
    <property type="glycosylation" value="1 site, No reported glycans"/>
</dbReference>
<dbReference type="GlyGen" id="P17982">
    <property type="glycosylation" value="1 site"/>
</dbReference>
<dbReference type="PhosphoSitePlus" id="P17982"/>
<dbReference type="AGR" id="RGD:3521"/>
<dbReference type="RGD" id="3521">
    <property type="gene designation" value="Rt6"/>
</dbReference>
<dbReference type="InParanoid" id="P17982"/>
<dbReference type="Proteomes" id="UP000002494">
    <property type="component" value="Unplaced"/>
</dbReference>
<dbReference type="GO" id="GO:0009897">
    <property type="term" value="C:external side of plasma membrane"/>
    <property type="evidence" value="ECO:0000250"/>
    <property type="project" value="UniProtKB"/>
</dbReference>
<dbReference type="GO" id="GO:0016798">
    <property type="term" value="F:hydrolase activity, acting on glycosyl bonds"/>
    <property type="evidence" value="ECO:0000250"/>
    <property type="project" value="UniProtKB"/>
</dbReference>
<dbReference type="GO" id="GO:0003953">
    <property type="term" value="F:NAD+ nucleosidase activity"/>
    <property type="evidence" value="ECO:0007669"/>
    <property type="project" value="UniProtKB-EC"/>
</dbReference>
<dbReference type="GO" id="GO:0003950">
    <property type="term" value="F:NAD+ poly-ADP-ribosyltransferase activity"/>
    <property type="evidence" value="ECO:0000318"/>
    <property type="project" value="GO_Central"/>
</dbReference>
<dbReference type="GO" id="GO:0106274">
    <property type="term" value="F:NAD+-protein-arginine ADP-ribosyltransferase activity"/>
    <property type="evidence" value="ECO:0000250"/>
    <property type="project" value="UniProtKB"/>
</dbReference>
<dbReference type="GO" id="GO:0016779">
    <property type="term" value="F:nucleotidyltransferase activity"/>
    <property type="evidence" value="ECO:0007669"/>
    <property type="project" value="UniProtKB-KW"/>
</dbReference>
<dbReference type="GO" id="GO:0019677">
    <property type="term" value="P:NAD catabolic process"/>
    <property type="evidence" value="ECO:0000250"/>
    <property type="project" value="UniProtKB"/>
</dbReference>
<dbReference type="FunFam" id="3.90.176.10:FF:000001">
    <property type="entry name" value="NAD(P)(+)--arginine ADP-ribosyltransferase"/>
    <property type="match status" value="1"/>
</dbReference>
<dbReference type="Gene3D" id="3.90.176.10">
    <property type="entry name" value="Toxin ADP-ribosyltransferase, Chain A, domain 1"/>
    <property type="match status" value="1"/>
</dbReference>
<dbReference type="InterPro" id="IPR050999">
    <property type="entry name" value="ADP-ribosyltransferase_ARG"/>
</dbReference>
<dbReference type="InterPro" id="IPR000768">
    <property type="entry name" value="ART"/>
</dbReference>
<dbReference type="PANTHER" id="PTHR10339">
    <property type="entry name" value="ADP-RIBOSYLTRANSFERASE"/>
    <property type="match status" value="1"/>
</dbReference>
<dbReference type="PANTHER" id="PTHR10339:SF24">
    <property type="entry name" value="T-CELL ECTO-ADP-RIBOSYLTRANSFERASE 1-RELATED"/>
    <property type="match status" value="1"/>
</dbReference>
<dbReference type="Pfam" id="PF01129">
    <property type="entry name" value="ART"/>
    <property type="match status" value="1"/>
</dbReference>
<dbReference type="PRINTS" id="PR00970">
    <property type="entry name" value="RIBTRNSFRASE"/>
</dbReference>
<dbReference type="SUPFAM" id="SSF56399">
    <property type="entry name" value="ADP-ribosylation"/>
    <property type="match status" value="1"/>
</dbReference>
<dbReference type="PROSITE" id="PS01291">
    <property type="entry name" value="ART"/>
    <property type="match status" value="1"/>
</dbReference>
<dbReference type="PROSITE" id="PS51996">
    <property type="entry name" value="TR_MART"/>
    <property type="match status" value="1"/>
</dbReference>
<name>NAR2A_RAT</name>
<proteinExistence type="evidence at protein level"/>
<sequence length="275" mass="31388">MPSNICKFFLTWWLIQQVTGLTGPLMLDTAPNAFDDQYEGCVNKMEEKAPLLLKEDFNKSEKLKVAWEEAKKRWNNIKPSMSYPKGFNDFHGTALVAYTGSIGVDFNRAVREFKENPGQFHYKAFHYYLTRALQLLSNGDCHSVYRGTKTRFHYTGAGSVRFGQFTSSSLSKTVAQSPEFFSDDGTLFIIKTCLGVYIKEFSFYPDQEEVLIPGYEVYQKVRTQGYNEIFLDSPKRKKSNYNCLYSSAGTRESCVSLFLVVLTSLLVQLLCLAEP</sequence>
<accession>P17982</accession>
<comment type="function">
    <text>Has NAD(+) glycohydrolase activity and extremely low ADP-ribosyltransferase activity.</text>
</comment>
<comment type="catalytic activity">
    <reaction evidence="2">
        <text>L-arginyl-[protein] + NAD(+) = N(omega)-(ADP-D-ribosyl)-L-arginyl-[protein] + nicotinamide + H(+)</text>
        <dbReference type="Rhea" id="RHEA:19149"/>
        <dbReference type="Rhea" id="RHEA-COMP:10532"/>
        <dbReference type="Rhea" id="RHEA-COMP:15087"/>
        <dbReference type="ChEBI" id="CHEBI:15378"/>
        <dbReference type="ChEBI" id="CHEBI:17154"/>
        <dbReference type="ChEBI" id="CHEBI:29965"/>
        <dbReference type="ChEBI" id="CHEBI:57540"/>
        <dbReference type="ChEBI" id="CHEBI:142554"/>
        <dbReference type="EC" id="2.4.2.31"/>
    </reaction>
</comment>
<comment type="catalytic activity">
    <reaction evidence="2">
        <text>NAD(+) + H2O = ADP-D-ribose + nicotinamide + H(+)</text>
        <dbReference type="Rhea" id="RHEA:16301"/>
        <dbReference type="ChEBI" id="CHEBI:15377"/>
        <dbReference type="ChEBI" id="CHEBI:15378"/>
        <dbReference type="ChEBI" id="CHEBI:17154"/>
        <dbReference type="ChEBI" id="CHEBI:57540"/>
        <dbReference type="ChEBI" id="CHEBI:57967"/>
        <dbReference type="EC" id="3.2.2.5"/>
    </reaction>
</comment>
<comment type="subcellular location">
    <subcellularLocation>
        <location>Cell membrane</location>
        <topology>Lipid-anchor</topology>
        <topology>GPI-anchor</topology>
    </subcellularLocation>
</comment>
<comment type="tissue specificity">
    <text>Postthymic T-cells.</text>
</comment>
<comment type="similarity">
    <text evidence="6">Belongs to the Arg-specific ADP-ribosyltransferase family.</text>
</comment>
<keyword id="KW-1003">Cell membrane</keyword>
<keyword id="KW-1015">Disulfide bond</keyword>
<keyword id="KW-0325">Glycoprotein</keyword>
<keyword id="KW-0328">Glycosyltransferase</keyword>
<keyword id="KW-0336">GPI-anchor</keyword>
<keyword id="KW-0378">Hydrolase</keyword>
<keyword id="KW-0449">Lipoprotein</keyword>
<keyword id="KW-0472">Membrane</keyword>
<keyword id="KW-0520">NAD</keyword>
<keyword id="KW-0521">NADP</keyword>
<keyword id="KW-0548">Nucleotidyltransferase</keyword>
<keyword id="KW-1185">Reference proteome</keyword>
<keyword id="KW-0732">Signal</keyword>
<keyword id="KW-0808">Transferase</keyword>
<gene>
    <name type="primary">Art2a</name>
    <name type="synonym">Rt6</name>
    <name type="synonym">Rt6-a</name>
</gene>
<reference key="1">
    <citation type="journal article" date="1990" name="Nucleic Acids Res.">
        <title>Nucleotide and deduced amino acid sequence of the rat T-cell alloantigen RT6.1.</title>
        <authorList>
            <person name="Haag F."/>
            <person name="Koch F."/>
            <person name="Thiele H.-G."/>
        </authorList>
    </citation>
    <scope>NUCLEOTIDE SEQUENCE [MRNA]</scope>
    <source>
        <strain>Lewis A</strain>
    </source>
</reference>
<reference key="2">
    <citation type="journal article" date="1996" name="FEBS Lett.">
        <title>Increase in ADP-ribosyltransferase activity of rat T lymphocyte alloantigen RT6.1 by a single amino acid mutation.</title>
        <authorList>
            <person name="Maehama T."/>
            <person name="Hoshino S."/>
            <person name="Katada T."/>
        </authorList>
    </citation>
    <scope>MUTAGENESIS OF GLN-207</scope>
</reference>
<protein>
    <recommendedName>
        <fullName>T-cell ecto-ADP-ribosyltransferase 1</fullName>
        <ecNumber evidence="2">2.4.2.31</ecNumber>
    </recommendedName>
    <alternativeName>
        <fullName>Alloantigen Rt6.1</fullName>
    </alternativeName>
    <alternativeName>
        <fullName>Mono(ADP-ribosyl)transferase 2A</fullName>
    </alternativeName>
    <alternativeName>
        <fullName>NAD(+) glycohydrolase</fullName>
        <ecNumber evidence="2">3.2.2.5</ecNumber>
    </alternativeName>
    <alternativeName>
        <fullName>T-cell NAD(P)(+)--arginine ADP-ribosyltransferase 1</fullName>
    </alternativeName>
    <alternativeName>
        <fullName>T-cell mono(ADP-ribosyl)transferase 1</fullName>
    </alternativeName>
    <alternativeName>
        <fullName>T-cell surface protein Rt6.1</fullName>
    </alternativeName>
</protein>
<feature type="signal peptide">
    <location>
        <begin position="1"/>
        <end position="20"/>
    </location>
</feature>
<feature type="chain" id="PRO_0000019319" description="T-cell ecto-ADP-ribosyltransferase 1">
    <location>
        <begin position="21"/>
        <end position="246"/>
    </location>
</feature>
<feature type="propeptide" id="PRO_0000019320" description="Removed in mature form" evidence="1">
    <location>
        <begin position="247"/>
        <end position="275"/>
    </location>
</feature>
<feature type="domain" description="TR mART core" evidence="4">
    <location>
        <begin position="61"/>
        <end position="238"/>
    </location>
</feature>
<feature type="active site" evidence="4">
    <location>
        <position position="146"/>
    </location>
</feature>
<feature type="active site" evidence="4">
    <location>
        <position position="167"/>
    </location>
</feature>
<feature type="active site" evidence="4">
    <location>
        <position position="209"/>
    </location>
</feature>
<feature type="binding site" evidence="1">
    <location>
        <position position="98"/>
    </location>
    <ligand>
        <name>NAD(+)</name>
        <dbReference type="ChEBI" id="CHEBI:57540"/>
    </ligand>
</feature>
<feature type="binding site" evidence="1">
    <location>
        <position position="146"/>
    </location>
    <ligand>
        <name>NAD(+)</name>
        <dbReference type="ChEBI" id="CHEBI:57540"/>
    </ligand>
</feature>
<feature type="binding site" evidence="1">
    <location>
        <position position="164"/>
    </location>
    <ligand>
        <name>NAD(+)</name>
        <dbReference type="ChEBI" id="CHEBI:57540"/>
    </ligand>
</feature>
<feature type="binding site" evidence="1">
    <location>
        <position position="202"/>
    </location>
    <ligand>
        <name>NAD(+)</name>
        <dbReference type="ChEBI" id="CHEBI:57540"/>
    </ligand>
</feature>
<feature type="lipid moiety-binding region" description="GPI-anchor amidated serine" evidence="1">
    <location>
        <position position="246"/>
    </location>
</feature>
<feature type="glycosylation site" description="N-linked (GlcNAc...) asparagine" evidence="3">
    <location>
        <position position="58"/>
    </location>
</feature>
<feature type="disulfide bond" evidence="1">
    <location>
        <begin position="41"/>
        <end position="243"/>
    </location>
</feature>
<feature type="disulfide bond" evidence="1">
    <location>
        <begin position="141"/>
        <end position="193"/>
    </location>
</feature>
<feature type="mutagenesis site" description="Increased ADP-ribosyltransferase activity." evidence="5">
    <original>Q</original>
    <variation>E</variation>
    <location>
        <position position="207"/>
    </location>
</feature>
<evidence type="ECO:0000250" key="1"/>
<evidence type="ECO:0000250" key="2">
    <source>
        <dbReference type="UniProtKB" id="P17981"/>
    </source>
</evidence>
<evidence type="ECO:0000255" key="3"/>
<evidence type="ECO:0000255" key="4">
    <source>
        <dbReference type="PROSITE-ProRule" id="PRU01340"/>
    </source>
</evidence>
<evidence type="ECO:0000269" key="5">
    <source>
    </source>
</evidence>
<evidence type="ECO:0000305" key="6"/>
<organism>
    <name type="scientific">Rattus norvegicus</name>
    <name type="common">Rat</name>
    <dbReference type="NCBI Taxonomy" id="10116"/>
    <lineage>
        <taxon>Eukaryota</taxon>
        <taxon>Metazoa</taxon>
        <taxon>Chordata</taxon>
        <taxon>Craniata</taxon>
        <taxon>Vertebrata</taxon>
        <taxon>Euteleostomi</taxon>
        <taxon>Mammalia</taxon>
        <taxon>Eutheria</taxon>
        <taxon>Euarchontoglires</taxon>
        <taxon>Glires</taxon>
        <taxon>Rodentia</taxon>
        <taxon>Myomorpha</taxon>
        <taxon>Muroidea</taxon>
        <taxon>Muridae</taxon>
        <taxon>Murinae</taxon>
        <taxon>Rattus</taxon>
    </lineage>
</organism>